<protein>
    <recommendedName>
        <fullName>Ras-related protein Rab-15</fullName>
        <ecNumber evidence="3">3.6.5.2</ecNumber>
    </recommendedName>
</protein>
<name>RAB15_RAT</name>
<sequence>MAKQYDVLFRLLLIGDSGVGKTCLLCRFTDNEFHSSHISTIGVDFKMKTIEVDGIKVRIQIWDTAGQERYQTITKQYYRRAQGIFLVYDISSERSYQHIMKWVSDVDEYAPEGVQKILIGNKADEEQKRQVGREQGQQLAKEYGMDFYETSACTNLNIKESFTRLTELVLQAHRKELDGLRTCASNELALAELEEDEGKTEGPANSSKTCWC</sequence>
<feature type="chain" id="PRO_0000121190" description="Ras-related protein Rab-15">
    <location>
        <begin position="1"/>
        <end position="212"/>
    </location>
</feature>
<feature type="short sequence motif" description="Switch 1" evidence="4">
    <location>
        <begin position="31"/>
        <end position="45"/>
    </location>
</feature>
<feature type="short sequence motif" description="Switch 2" evidence="4">
    <location>
        <begin position="63"/>
        <end position="80"/>
    </location>
</feature>
<feature type="binding site" evidence="3">
    <location>
        <position position="17"/>
    </location>
    <ligand>
        <name>GTP</name>
        <dbReference type="ChEBI" id="CHEBI:37565"/>
    </ligand>
</feature>
<feature type="binding site" evidence="3">
    <location>
        <position position="18"/>
    </location>
    <ligand>
        <name>GTP</name>
        <dbReference type="ChEBI" id="CHEBI:37565"/>
    </ligand>
</feature>
<feature type="binding site" evidence="3">
    <location>
        <position position="19"/>
    </location>
    <ligand>
        <name>GTP</name>
        <dbReference type="ChEBI" id="CHEBI:37565"/>
    </ligand>
</feature>
<feature type="binding site" evidence="3">
    <location>
        <position position="20"/>
    </location>
    <ligand>
        <name>GTP</name>
        <dbReference type="ChEBI" id="CHEBI:37565"/>
    </ligand>
</feature>
<feature type="binding site" evidence="3">
    <location>
        <position position="21"/>
    </location>
    <ligand>
        <name>GTP</name>
        <dbReference type="ChEBI" id="CHEBI:37565"/>
    </ligand>
</feature>
<feature type="binding site" evidence="3">
    <location>
        <position position="22"/>
    </location>
    <ligand>
        <name>GTP</name>
        <dbReference type="ChEBI" id="CHEBI:37565"/>
    </ligand>
</feature>
<feature type="binding site" evidence="3">
    <location>
        <position position="22"/>
    </location>
    <ligand>
        <name>Mg(2+)</name>
        <dbReference type="ChEBI" id="CHEBI:18420"/>
    </ligand>
</feature>
<feature type="binding site" evidence="3">
    <location>
        <position position="23"/>
    </location>
    <ligand>
        <name>GTP</name>
        <dbReference type="ChEBI" id="CHEBI:37565"/>
    </ligand>
</feature>
<feature type="binding site" evidence="3">
    <location>
        <position position="35"/>
    </location>
    <ligand>
        <name>GTP</name>
        <dbReference type="ChEBI" id="CHEBI:37565"/>
    </ligand>
</feature>
<feature type="binding site" evidence="3">
    <location>
        <position position="39"/>
    </location>
    <ligand>
        <name>GTP</name>
        <dbReference type="ChEBI" id="CHEBI:37565"/>
    </ligand>
</feature>
<feature type="binding site" evidence="3">
    <location>
        <position position="40"/>
    </location>
    <ligand>
        <name>GTP</name>
        <dbReference type="ChEBI" id="CHEBI:37565"/>
    </ligand>
</feature>
<feature type="binding site" evidence="3">
    <location>
        <position position="40"/>
    </location>
    <ligand>
        <name>Mg(2+)</name>
        <dbReference type="ChEBI" id="CHEBI:18420"/>
    </ligand>
</feature>
<feature type="binding site" evidence="3">
    <location>
        <position position="63"/>
    </location>
    <ligand>
        <name>Mg(2+)</name>
        <dbReference type="ChEBI" id="CHEBI:18420"/>
    </ligand>
</feature>
<feature type="binding site" evidence="3">
    <location>
        <position position="66"/>
    </location>
    <ligand>
        <name>GTP</name>
        <dbReference type="ChEBI" id="CHEBI:37565"/>
    </ligand>
</feature>
<feature type="binding site" evidence="3">
    <location>
        <position position="121"/>
    </location>
    <ligand>
        <name>GTP</name>
        <dbReference type="ChEBI" id="CHEBI:37565"/>
    </ligand>
</feature>
<feature type="binding site" evidence="3">
    <location>
        <position position="122"/>
    </location>
    <ligand>
        <name>GTP</name>
        <dbReference type="ChEBI" id="CHEBI:37565"/>
    </ligand>
</feature>
<feature type="binding site" evidence="3">
    <location>
        <position position="124"/>
    </location>
    <ligand>
        <name>GTP</name>
        <dbReference type="ChEBI" id="CHEBI:37565"/>
    </ligand>
</feature>
<feature type="binding site" evidence="3">
    <location>
        <position position="151"/>
    </location>
    <ligand>
        <name>GTP</name>
        <dbReference type="ChEBI" id="CHEBI:37565"/>
    </ligand>
</feature>
<feature type="binding site" evidence="3">
    <location>
        <position position="152"/>
    </location>
    <ligand>
        <name>GTP</name>
        <dbReference type="ChEBI" id="CHEBI:37565"/>
    </ligand>
</feature>
<feature type="modified residue" description="Cysteine methyl ester" evidence="1">
    <location>
        <position position="212"/>
    </location>
</feature>
<feature type="lipid moiety-binding region" description="S-geranylgeranyl cysteine" evidence="1">
    <location>
        <position position="210"/>
    </location>
</feature>
<feature type="lipid moiety-binding region" description="S-geranylgeranyl cysteine" evidence="1">
    <location>
        <position position="212"/>
    </location>
</feature>
<evidence type="ECO:0000250" key="1"/>
<evidence type="ECO:0000250" key="2">
    <source>
        <dbReference type="UniProtKB" id="P59190"/>
    </source>
</evidence>
<evidence type="ECO:0000250" key="3">
    <source>
        <dbReference type="UniProtKB" id="P61026"/>
    </source>
</evidence>
<evidence type="ECO:0000250" key="4">
    <source>
        <dbReference type="UniProtKB" id="P62820"/>
    </source>
</evidence>
<evidence type="ECO:0000269" key="5">
    <source>
    </source>
</evidence>
<evidence type="ECO:0000305" key="6"/>
<evidence type="ECO:0000312" key="7">
    <source>
        <dbReference type="RGD" id="735172"/>
    </source>
</evidence>
<keyword id="KW-1003">Cell membrane</keyword>
<keyword id="KW-0342">GTP-binding</keyword>
<keyword id="KW-0378">Hydrolase</keyword>
<keyword id="KW-0449">Lipoprotein</keyword>
<keyword id="KW-0460">Magnesium</keyword>
<keyword id="KW-0472">Membrane</keyword>
<keyword id="KW-0479">Metal-binding</keyword>
<keyword id="KW-0488">Methylation</keyword>
<keyword id="KW-0547">Nucleotide-binding</keyword>
<keyword id="KW-0636">Prenylation</keyword>
<keyword id="KW-0653">Protein transport</keyword>
<keyword id="KW-1185">Reference proteome</keyword>
<keyword id="KW-0813">Transport</keyword>
<organism>
    <name type="scientific">Rattus norvegicus</name>
    <name type="common">Rat</name>
    <dbReference type="NCBI Taxonomy" id="10116"/>
    <lineage>
        <taxon>Eukaryota</taxon>
        <taxon>Metazoa</taxon>
        <taxon>Chordata</taxon>
        <taxon>Craniata</taxon>
        <taxon>Vertebrata</taxon>
        <taxon>Euteleostomi</taxon>
        <taxon>Mammalia</taxon>
        <taxon>Eutheria</taxon>
        <taxon>Euarchontoglires</taxon>
        <taxon>Glires</taxon>
        <taxon>Rodentia</taxon>
        <taxon>Myomorpha</taxon>
        <taxon>Muroidea</taxon>
        <taxon>Muridae</taxon>
        <taxon>Murinae</taxon>
        <taxon>Rattus</taxon>
    </lineage>
</organism>
<comment type="function">
    <text evidence="3 5">The small GTPases Rab are key regulators of intracellular membrane trafficking, from the formation of transport vesicles to their fusion with membranes. Rabs cycle between an inactive GDP-bound form and an active GTP-bound form that is able to recruit to membranes different sets of downstream effectors directly responsible for vesicle formation, movement, tethering and fusion (By similarity). RAB15 may act in concert with RAB3A in regulating aspects of synaptic vesicle membrane flow within the nerve terminal (PubMed:1313420).</text>
</comment>
<comment type="catalytic activity">
    <reaction evidence="3">
        <text>GTP + H2O = GDP + phosphate + H(+)</text>
        <dbReference type="Rhea" id="RHEA:19669"/>
        <dbReference type="ChEBI" id="CHEBI:15377"/>
        <dbReference type="ChEBI" id="CHEBI:15378"/>
        <dbReference type="ChEBI" id="CHEBI:37565"/>
        <dbReference type="ChEBI" id="CHEBI:43474"/>
        <dbReference type="ChEBI" id="CHEBI:58189"/>
        <dbReference type="EC" id="3.6.5.2"/>
    </reaction>
    <physiologicalReaction direction="left-to-right" evidence="3">
        <dbReference type="Rhea" id="RHEA:19670"/>
    </physiologicalReaction>
</comment>
<comment type="cofactor">
    <cofactor evidence="3">
        <name>Mg(2+)</name>
        <dbReference type="ChEBI" id="CHEBI:18420"/>
    </cofactor>
</comment>
<comment type="activity regulation">
    <text evidence="6">Regulated by guanine nucleotide exchange factors (GEFs) which promote the exchange of bound GDP for free GTP. Regulated by GTPase activating proteins (GAPs) which increase the GTP hydrolysis activity. Inhibited by GDP dissociation inhibitors (GDIs).</text>
</comment>
<comment type="subunit">
    <text evidence="2">The GTP bound form of RAB15 interacts with REP15. Interacts (GTP-bound form) with MICAL1, MICAL3, MICALCL, EHBP1 and EHBP1L1.</text>
</comment>
<comment type="subcellular location">
    <subcellularLocation>
        <location evidence="6">Cell membrane</location>
        <topology evidence="6">Lipid-anchor</topology>
        <orientation evidence="6">Cytoplasmic side</orientation>
    </subcellularLocation>
</comment>
<comment type="tissue specificity">
    <text evidence="5">Expressed predominantly in neural tissues.</text>
</comment>
<comment type="domain">
    <text evidence="4">Switch 1, switch 2 and the interswitch regions are characteristic of Rab GTPases and mediate the interactions with Rab downstream effectors. The switch regions undergo conformational changes upon nucleotide binding which drives interaction with specific sets of effector proteins, with most effectors only binding to GTP-bound Rab.</text>
</comment>
<comment type="similarity">
    <text evidence="6">Belongs to the small GTPase superfamily. Rab family.</text>
</comment>
<proteinExistence type="evidence at transcript level"/>
<accession>P35289</accession>
<accession>Q504L6</accession>
<gene>
    <name evidence="7" type="primary">Rab15</name>
</gene>
<reference key="1">
    <citation type="journal article" date="1992" name="J. Biol. Chem.">
        <title>Rab15, a novel low molecular weight GTP-binding protein specifically expressed in rat brain.</title>
        <authorList>
            <person name="Elferink L.A."/>
            <person name="Anzai K."/>
            <person name="Scheller R.H."/>
        </authorList>
    </citation>
    <scope>NUCLEOTIDE SEQUENCE [MRNA]</scope>
    <scope>FUNCTION</scope>
    <scope>TISSUE SPECIFICITY</scope>
    <source>
        <strain>Sprague-Dawley</strain>
        <tissue>Brain</tissue>
    </source>
</reference>
<reference key="2">
    <citation type="journal article" date="1992" name="J. Biol. Chem.">
        <authorList>
            <person name="Elferink L.A."/>
            <person name="Anzai K."/>
            <person name="Scheller R.H."/>
        </authorList>
    </citation>
    <scope>ERRATUM OF PUBMED:1313420</scope>
</reference>
<reference key="3">
    <citation type="journal article" date="2004" name="Genome Res.">
        <title>The status, quality, and expansion of the NIH full-length cDNA project: the Mammalian Gene Collection (MGC).</title>
        <authorList>
            <consortium name="The MGC Project Team"/>
        </authorList>
    </citation>
    <scope>NUCLEOTIDE SEQUENCE [LARGE SCALE MRNA]</scope>
    <source>
        <tissue>Brain</tissue>
    </source>
</reference>
<dbReference type="EC" id="3.6.5.2" evidence="3"/>
<dbReference type="EMBL" id="M83679">
    <property type="protein sequence ID" value="AAA41995.1"/>
    <property type="molecule type" value="mRNA"/>
</dbReference>
<dbReference type="EMBL" id="BC094954">
    <property type="protein sequence ID" value="AAH94954.1"/>
    <property type="molecule type" value="mRNA"/>
</dbReference>
<dbReference type="PIR" id="F42148">
    <property type="entry name" value="F42148"/>
</dbReference>
<dbReference type="RefSeq" id="NP_942044.1">
    <property type="nucleotide sequence ID" value="NM_198749.2"/>
</dbReference>
<dbReference type="SMR" id="P35289"/>
<dbReference type="BioGRID" id="256132">
    <property type="interactions" value="1"/>
</dbReference>
<dbReference type="FunCoup" id="P35289">
    <property type="interactions" value="267"/>
</dbReference>
<dbReference type="STRING" id="10116.ENSRNOP00000010043"/>
<dbReference type="iPTMnet" id="P35289"/>
<dbReference type="PhosphoSitePlus" id="P35289"/>
<dbReference type="jPOST" id="P35289"/>
<dbReference type="PaxDb" id="10116-ENSRNOP00000010043"/>
<dbReference type="Ensembl" id="ENSRNOT00000010043.6">
    <property type="protein sequence ID" value="ENSRNOP00000010043.3"/>
    <property type="gene ID" value="ENSRNOG00000007364.6"/>
</dbReference>
<dbReference type="GeneID" id="299156"/>
<dbReference type="KEGG" id="rno:299156"/>
<dbReference type="UCSC" id="RGD:735172">
    <property type="organism name" value="rat"/>
</dbReference>
<dbReference type="AGR" id="RGD:735172"/>
<dbReference type="CTD" id="376267"/>
<dbReference type="RGD" id="735172">
    <property type="gene designation" value="Rab15"/>
</dbReference>
<dbReference type="eggNOG" id="KOG0078">
    <property type="taxonomic scope" value="Eukaryota"/>
</dbReference>
<dbReference type="GeneTree" id="ENSGT00940000157848"/>
<dbReference type="HOGENOM" id="CLU_041217_23_1_1"/>
<dbReference type="InParanoid" id="P35289"/>
<dbReference type="OMA" id="SSKNCWC"/>
<dbReference type="OrthoDB" id="9989112at2759"/>
<dbReference type="PhylomeDB" id="P35289"/>
<dbReference type="TreeFam" id="TF314097"/>
<dbReference type="Reactome" id="R-RNO-8873719">
    <property type="pathway name" value="RAB geranylgeranylation"/>
</dbReference>
<dbReference type="PRO" id="PR:P35289"/>
<dbReference type="Proteomes" id="UP000002494">
    <property type="component" value="Chromosome 6"/>
</dbReference>
<dbReference type="Bgee" id="ENSRNOG00000007364">
    <property type="expression patterns" value="Expressed in frontal cortex and 17 other cell types or tissues"/>
</dbReference>
<dbReference type="GO" id="GO:0005929">
    <property type="term" value="C:cilium"/>
    <property type="evidence" value="ECO:0000266"/>
    <property type="project" value="RGD"/>
</dbReference>
<dbReference type="GO" id="GO:0005737">
    <property type="term" value="C:cytoplasm"/>
    <property type="evidence" value="ECO:0000266"/>
    <property type="project" value="RGD"/>
</dbReference>
<dbReference type="GO" id="GO:0010008">
    <property type="term" value="C:endosome membrane"/>
    <property type="evidence" value="ECO:0000266"/>
    <property type="project" value="RGD"/>
</dbReference>
<dbReference type="GO" id="GO:0048471">
    <property type="term" value="C:perinuclear region of cytoplasm"/>
    <property type="evidence" value="ECO:0000266"/>
    <property type="project" value="RGD"/>
</dbReference>
<dbReference type="GO" id="GO:0005886">
    <property type="term" value="C:plasma membrane"/>
    <property type="evidence" value="ECO:0007669"/>
    <property type="project" value="UniProtKB-SubCell"/>
</dbReference>
<dbReference type="GO" id="GO:0098793">
    <property type="term" value="C:presynapse"/>
    <property type="evidence" value="ECO:0007669"/>
    <property type="project" value="GOC"/>
</dbReference>
<dbReference type="GO" id="GO:0003925">
    <property type="term" value="F:G protein activity"/>
    <property type="evidence" value="ECO:0000266"/>
    <property type="project" value="RGD"/>
</dbReference>
<dbReference type="GO" id="GO:0005525">
    <property type="term" value="F:GTP binding"/>
    <property type="evidence" value="ECO:0000304"/>
    <property type="project" value="RGD"/>
</dbReference>
<dbReference type="GO" id="GO:0006887">
    <property type="term" value="P:exocytosis"/>
    <property type="evidence" value="ECO:0000318"/>
    <property type="project" value="GO_Central"/>
</dbReference>
<dbReference type="GO" id="GO:0007269">
    <property type="term" value="P:neurotransmitter secretion"/>
    <property type="evidence" value="ECO:0000304"/>
    <property type="project" value="RGD"/>
</dbReference>
<dbReference type="GO" id="GO:1903307">
    <property type="term" value="P:positive regulation of regulated secretory pathway"/>
    <property type="evidence" value="ECO:0000266"/>
    <property type="project" value="RGD"/>
</dbReference>
<dbReference type="GO" id="GO:0015031">
    <property type="term" value="P:protein transport"/>
    <property type="evidence" value="ECO:0007669"/>
    <property type="project" value="UniProtKB-KW"/>
</dbReference>
<dbReference type="GO" id="GO:0032482">
    <property type="term" value="P:Rab protein signal transduction"/>
    <property type="evidence" value="ECO:0007669"/>
    <property type="project" value="InterPro"/>
</dbReference>
<dbReference type="GO" id="GO:0006898">
    <property type="term" value="P:receptor-mediated endocytosis"/>
    <property type="evidence" value="ECO:0000266"/>
    <property type="project" value="RGD"/>
</dbReference>
<dbReference type="CDD" id="cd04117">
    <property type="entry name" value="Rab15"/>
    <property type="match status" value="1"/>
</dbReference>
<dbReference type="FunFam" id="3.40.50.300:FF:000990">
    <property type="entry name" value="ras-related protein Rab-15 isoform X1"/>
    <property type="match status" value="1"/>
</dbReference>
<dbReference type="Gene3D" id="3.40.50.300">
    <property type="entry name" value="P-loop containing nucleotide triphosphate hydrolases"/>
    <property type="match status" value="1"/>
</dbReference>
<dbReference type="InterPro" id="IPR027417">
    <property type="entry name" value="P-loop_NTPase"/>
</dbReference>
<dbReference type="InterPro" id="IPR041826">
    <property type="entry name" value="Rab15"/>
</dbReference>
<dbReference type="InterPro" id="IPR005225">
    <property type="entry name" value="Small_GTP-bd"/>
</dbReference>
<dbReference type="InterPro" id="IPR001806">
    <property type="entry name" value="Small_GTPase"/>
</dbReference>
<dbReference type="InterPro" id="IPR050305">
    <property type="entry name" value="Small_GTPase_Rab"/>
</dbReference>
<dbReference type="NCBIfam" id="TIGR00231">
    <property type="entry name" value="small_GTP"/>
    <property type="match status" value="1"/>
</dbReference>
<dbReference type="PANTHER" id="PTHR47980">
    <property type="entry name" value="LD44762P"/>
    <property type="match status" value="1"/>
</dbReference>
<dbReference type="Pfam" id="PF00071">
    <property type="entry name" value="Ras"/>
    <property type="match status" value="1"/>
</dbReference>
<dbReference type="PRINTS" id="PR00449">
    <property type="entry name" value="RASTRNSFRMNG"/>
</dbReference>
<dbReference type="SMART" id="SM00175">
    <property type="entry name" value="RAB"/>
    <property type="match status" value="1"/>
</dbReference>
<dbReference type="SMART" id="SM00176">
    <property type="entry name" value="RAN"/>
    <property type="match status" value="1"/>
</dbReference>
<dbReference type="SMART" id="SM00173">
    <property type="entry name" value="RAS"/>
    <property type="match status" value="1"/>
</dbReference>
<dbReference type="SMART" id="SM00174">
    <property type="entry name" value="RHO"/>
    <property type="match status" value="1"/>
</dbReference>
<dbReference type="SUPFAM" id="SSF52540">
    <property type="entry name" value="P-loop containing nucleoside triphosphate hydrolases"/>
    <property type="match status" value="1"/>
</dbReference>
<dbReference type="PROSITE" id="PS51419">
    <property type="entry name" value="RAB"/>
    <property type="match status" value="1"/>
</dbReference>